<evidence type="ECO:0000250" key="1">
    <source>
        <dbReference type="UniProtKB" id="P13265"/>
    </source>
</evidence>
<evidence type="ECO:0000250" key="2">
    <source>
        <dbReference type="UniProtKB" id="P35052"/>
    </source>
</evidence>
<evidence type="ECO:0000250" key="3">
    <source>
        <dbReference type="UniProtKB" id="P51654"/>
    </source>
</evidence>
<evidence type="ECO:0000250" key="4">
    <source>
        <dbReference type="UniProtKB" id="Q6V9Y8"/>
    </source>
</evidence>
<evidence type="ECO:0000250" key="5">
    <source>
        <dbReference type="UniProtKB" id="Q8CFZ4"/>
    </source>
</evidence>
<evidence type="ECO:0000255" key="6"/>
<evidence type="ECO:0000305" key="7"/>
<feature type="signal peptide" evidence="6">
    <location>
        <begin position="1"/>
        <end position="24"/>
    </location>
</feature>
<feature type="chain" id="PRO_0000445414" description="Glypican-3 alpha subunit" evidence="3">
    <location>
        <begin position="25"/>
        <end position="358"/>
    </location>
</feature>
<feature type="chain" id="PRO_0000445415" description="Glypican-3 beta subunit" evidence="3">
    <location>
        <begin position="359"/>
        <end position="554"/>
    </location>
</feature>
<feature type="propeptide" id="PRO_0000295280" description="Removed in mature form" evidence="6">
    <location>
        <begin position="555"/>
        <end position="580"/>
    </location>
</feature>
<feature type="modified residue" description="Pyrrolidone carboxylic acid" evidence="3">
    <location>
        <position position="25"/>
    </location>
</feature>
<feature type="modified residue" description="Phosphoserine" evidence="3">
    <location>
        <position position="352"/>
    </location>
</feature>
<feature type="lipid moiety-binding region" description="GPI-anchor amidated asparagine" evidence="6">
    <location>
        <position position="554"/>
    </location>
</feature>
<feature type="glycosylation site" description="N-linked (GlcNAc...) asparagine" evidence="6">
    <location>
        <position position="124"/>
    </location>
</feature>
<feature type="glycosylation site" description="N-linked (GlcNAc...) asparagine" evidence="6">
    <location>
        <position position="241"/>
    </location>
</feature>
<feature type="glycosylation site" description="N-linked (GlcNAc...) asparagine" evidence="6">
    <location>
        <position position="418"/>
    </location>
</feature>
<feature type="glycosylation site" description="O-linked (Xyl...) (glycosaminoglycan) serine" evidence="6">
    <location>
        <position position="495"/>
    </location>
</feature>
<feature type="glycosylation site" description="O-linked (Xyl...) (glycosaminoglycan) serine" evidence="6">
    <location>
        <position position="509"/>
    </location>
</feature>
<feature type="disulfide bond" evidence="2">
    <location>
        <begin position="35"/>
        <end position="72"/>
    </location>
</feature>
<feature type="disulfide bond" evidence="2">
    <location>
        <begin position="65"/>
        <end position="262"/>
    </location>
</feature>
<feature type="disulfide bond" evidence="2">
    <location>
        <begin position="73"/>
        <end position="265"/>
    </location>
</feature>
<feature type="disulfide bond" evidence="2">
    <location>
        <begin position="197"/>
        <end position="349"/>
    </location>
</feature>
<feature type="disulfide bond" evidence="2">
    <location>
        <begin position="252"/>
        <end position="285"/>
    </location>
</feature>
<feature type="disulfide bond" description="Interchain (between alpha and beta chains)" evidence="2">
    <location>
        <begin position="274"/>
        <end position="422"/>
    </location>
</feature>
<feature type="disulfide bond" description="Interchain (between alpha and beta chains)" evidence="2">
    <location>
        <begin position="278"/>
        <end position="410"/>
    </location>
</feature>
<proteinExistence type="evidence at transcript level"/>
<sequence>MAGTVRTACLVVAMLLSLDFPGQAQPPPPPPDATCHQVRSFFQRLQPGLKWVPETPVPGSDLQVCLPKGPTCCSRKMEEKYQLTARLNMEQLLQSASKELKFLIIQNAAVFQEAFEIVVRHAKNYTNAMFKNNYPSLTPQAFEFVGEFFTDVSLYILGSDINVDDMVNELFDSLFPVIYTQLMNPGLPDSALDINECLRGARRDLKVFGNFPKLIMTQVSKSLQVTRIFLQALNLGIEVINTTDHLKFSKDCGRMLTRMWYCSYCQGLMMVKPCGGYCNVVMQGCMAGVVEIDKYWREYILSLEELVNGMYRIYDMENVLLGLFSTIHDSIQYVQKNAGKLTTTIGKLCAHSQQRQYRSAYYPEDLFIDKKVLKVARVEHEETLSSRRRELIQKLKSFISFYSALPGYICSHSPVAENDTLCWNGQELVERYSQKAARNGMKNQFNLHELKMKGPEPVVSQIIDKLKHINQLLRTMSVPKGRVLDKNLDEEGFESGDCGDDEDECIGGSGDGMMKVKNQLRFLAELAYDLDVDDAPGSNQQATPKDNEISTFHNLGNVHSPLKLLTSMAISVVCFFFLVH</sequence>
<protein>
    <recommendedName>
        <fullName>Glypican-3</fullName>
    </recommendedName>
    <alternativeName>
        <fullName>GTR2-2</fullName>
    </alternativeName>
    <alternativeName>
        <fullName>Intestinal protein OCI-5</fullName>
    </alternativeName>
    <alternativeName>
        <fullName>MXR7</fullName>
    </alternativeName>
    <component>
        <recommendedName>
            <fullName evidence="3">Glypican-3 alpha subunit</fullName>
        </recommendedName>
    </component>
    <component>
        <recommendedName>
            <fullName evidence="3">Glypican-3 beta subunit</fullName>
        </recommendedName>
    </component>
</protein>
<comment type="function">
    <text evidence="3 4 5">Cell surface proteoglycan (By similarity). Negatively regulates the hedgehog signaling pathway when attached via the GPI-anchor to the cell surface by competing with the hedgehog receptor PTC1 for binding to hedgehog proteins (By similarity). Binding to the hedgehog protein SHH triggers internalization of the complex by endocytosis and its subsequent lysosomal degradation (By similarity). Positively regulates the canonical Wnt signaling pathway by binding to the Wnt receptor Frizzled and stimulating the binding of the Frizzled receptor to Wnt ligands (By similarity). Positively regulates the non-canonical Wnt signaling pathway (By similarity). Binds to CD81 which decreases the availability of free CD81 for binding to the transcriptional repressor HHEX, resulting in nuclear translocation of HHEX and transcriptional repression (By similarity). Inhibits the dipeptidyl peptidase activity of DPP4 (By similarity). Plays a role in limb patterning and skeletal development by controlling the cellular response to BMP4 (By similarity). Modulates the effects of growth factors BMP2, BMP7 and FGF7 on renal branching morphogenesis (By similarity). Required for coronary vascular development (By similarity). Plays a role in regulating cell movements during gastrulation (By similarity).</text>
</comment>
<comment type="subunit">
    <text evidence="1 3 5">Heterodimer; disulfide-linked (By similarity). Cleavage by a furin-like convertase results in production of alpha and beta chains which form a disulfide-linked heterodimer (By similarity). Interacts with DPP4 (By similarity). Interacts with FGF2 (By similarity). Interacts with WNT5A (By similarity). Also interacts with WNT3A and WNT7B (By similarity). Interacts with hedgehog protein SHH; the heparan sulfate chains are not required for the interaction (By similarity). Also interacts with hedgehog protein IHH (By similarity). Interacts with CD81 (By similarity). Interacts with Wnt receptors FZD4, FZD7 and FZD8; the heparan sulfate chains are required for the interaction (By similarity).</text>
</comment>
<comment type="subcellular location">
    <subcellularLocation>
        <location evidence="1">Cell membrane</location>
        <topology evidence="1">Lipid-anchor</topology>
        <topology evidence="1">GPI-anchor</topology>
        <orientation evidence="1">Extracellular side</orientation>
    </subcellularLocation>
</comment>
<comment type="PTM">
    <text evidence="3">O-glycosylated; contains heparan sulfate and/or chondroitin sulfate.</text>
</comment>
<comment type="PTM">
    <text evidence="3">Cleaved intracellularly by a furin-like convertase to generate 2 subunits, alpha and beta, which remain associated through disulfide bonds and are associated with the cell surface via the GPI-anchor. This processing is essential for its role in inhibition of hedgehog signaling. A second proteolytic event may result in cleavage of the protein on the cell surface, separating it from the GPI-anchor and leading to its shedding from the cell surface.</text>
</comment>
<comment type="similarity">
    <text evidence="7">Belongs to the glypican family.</text>
</comment>
<gene>
    <name type="primary">GPC3</name>
</gene>
<accession>A5A6P7</accession>
<keyword id="KW-1003">Cell membrane</keyword>
<keyword id="KW-1015">Disulfide bond</keyword>
<keyword id="KW-0325">Glycoprotein</keyword>
<keyword id="KW-0336">GPI-anchor</keyword>
<keyword id="KW-0357">Heparan sulfate</keyword>
<keyword id="KW-0449">Lipoprotein</keyword>
<keyword id="KW-0472">Membrane</keyword>
<keyword id="KW-0597">Phosphoprotein</keyword>
<keyword id="KW-0646">Protease inhibitor</keyword>
<keyword id="KW-0654">Proteoglycan</keyword>
<keyword id="KW-0873">Pyrrolidone carboxylic acid</keyword>
<keyword id="KW-1185">Reference proteome</keyword>
<keyword id="KW-0732">Signal</keyword>
<name>GPC3_PANTR</name>
<reference key="1">
    <citation type="journal article" date="2007" name="Gene">
        <title>Mapping of chimpanzee full-length cDNAs onto the human genome unveils large potential divergence of the transcriptome.</title>
        <authorList>
            <person name="Sakate R."/>
            <person name="Suto Y."/>
            <person name="Imanishi T."/>
            <person name="Tanoue T."/>
            <person name="Hida M."/>
            <person name="Hayasaka I."/>
            <person name="Kusuda J."/>
            <person name="Gojobori T."/>
            <person name="Hashimoto K."/>
            <person name="Hirai M."/>
        </authorList>
    </citation>
    <scope>NUCLEOTIDE SEQUENCE [MRNA]</scope>
    <source>
        <tissue>Skin</tissue>
    </source>
</reference>
<dbReference type="EMBL" id="AB222175">
    <property type="protein sequence ID" value="BAF62420.1"/>
    <property type="molecule type" value="mRNA"/>
</dbReference>
<dbReference type="RefSeq" id="NP_001129209.1">
    <property type="nucleotide sequence ID" value="NM_001135737.1"/>
</dbReference>
<dbReference type="SMR" id="A5A6P7"/>
<dbReference type="FunCoup" id="A5A6P7">
    <property type="interactions" value="463"/>
</dbReference>
<dbReference type="STRING" id="9598.ENSPTRP00000068390"/>
<dbReference type="GlyCosmos" id="A5A6P7">
    <property type="glycosylation" value="5 sites, No reported glycans"/>
</dbReference>
<dbReference type="PaxDb" id="9598-ENSPTRP00000038390"/>
<dbReference type="GeneID" id="465866"/>
<dbReference type="KEGG" id="ptr:465866"/>
<dbReference type="CTD" id="2719"/>
<dbReference type="eggNOG" id="KOG3821">
    <property type="taxonomic scope" value="Eukaryota"/>
</dbReference>
<dbReference type="InParanoid" id="A5A6P7"/>
<dbReference type="OrthoDB" id="6352at9604"/>
<dbReference type="Proteomes" id="UP000002277">
    <property type="component" value="Unplaced"/>
</dbReference>
<dbReference type="GO" id="GO:0009986">
    <property type="term" value="C:cell surface"/>
    <property type="evidence" value="ECO:0000318"/>
    <property type="project" value="GO_Central"/>
</dbReference>
<dbReference type="GO" id="GO:0043202">
    <property type="term" value="C:lysosomal lumen"/>
    <property type="evidence" value="ECO:0007669"/>
    <property type="project" value="UniProtKB-ARBA"/>
</dbReference>
<dbReference type="GO" id="GO:0005886">
    <property type="term" value="C:plasma membrane"/>
    <property type="evidence" value="ECO:0000250"/>
    <property type="project" value="UniProtKB"/>
</dbReference>
<dbReference type="GO" id="GO:0098552">
    <property type="term" value="C:side of membrane"/>
    <property type="evidence" value="ECO:0007669"/>
    <property type="project" value="UniProtKB-KW"/>
</dbReference>
<dbReference type="GO" id="GO:0060422">
    <property type="term" value="F:peptidyl-dipeptidase inhibitor activity"/>
    <property type="evidence" value="ECO:0000250"/>
    <property type="project" value="UniProtKB"/>
</dbReference>
<dbReference type="GO" id="GO:0016477">
    <property type="term" value="P:cell migration"/>
    <property type="evidence" value="ECO:0000318"/>
    <property type="project" value="GO_Central"/>
</dbReference>
<dbReference type="GO" id="GO:0042074">
    <property type="term" value="P:cell migration involved in gastrulation"/>
    <property type="evidence" value="ECO:0000250"/>
    <property type="project" value="UniProtKB"/>
</dbReference>
<dbReference type="GO" id="GO:0072111">
    <property type="term" value="P:cell proliferation involved in kidney development"/>
    <property type="evidence" value="ECO:0000250"/>
    <property type="project" value="UniProtKB"/>
</dbReference>
<dbReference type="GO" id="GO:0060976">
    <property type="term" value="P:coronary vasculature development"/>
    <property type="evidence" value="ECO:0000250"/>
    <property type="project" value="UniProtKB"/>
</dbReference>
<dbReference type="GO" id="GO:0072180">
    <property type="term" value="P:mesonephric duct morphogenesis"/>
    <property type="evidence" value="ECO:0000250"/>
    <property type="project" value="UniProtKB"/>
</dbReference>
<dbReference type="GO" id="GO:0045879">
    <property type="term" value="P:negative regulation of smoothened signaling pathway"/>
    <property type="evidence" value="ECO:0000250"/>
    <property type="project" value="UniProtKB"/>
</dbReference>
<dbReference type="GO" id="GO:0090263">
    <property type="term" value="P:positive regulation of canonical Wnt signaling pathway"/>
    <property type="evidence" value="ECO:0000250"/>
    <property type="project" value="UniProtKB"/>
</dbReference>
<dbReference type="GO" id="GO:0045807">
    <property type="term" value="P:positive regulation of endocytosis"/>
    <property type="evidence" value="ECO:0000250"/>
    <property type="project" value="UniProtKB"/>
</dbReference>
<dbReference type="GO" id="GO:0045732">
    <property type="term" value="P:positive regulation of protein catabolic process"/>
    <property type="evidence" value="ECO:0000250"/>
    <property type="project" value="UniProtKB"/>
</dbReference>
<dbReference type="GO" id="GO:0060828">
    <property type="term" value="P:regulation of canonical Wnt signaling pathway"/>
    <property type="evidence" value="ECO:0000250"/>
    <property type="project" value="UniProtKB"/>
</dbReference>
<dbReference type="GO" id="GO:2000050">
    <property type="term" value="P:regulation of non-canonical Wnt signaling pathway"/>
    <property type="evidence" value="ECO:0000250"/>
    <property type="project" value="UniProtKB"/>
</dbReference>
<dbReference type="GO" id="GO:1905475">
    <property type="term" value="P:regulation of protein localization to membrane"/>
    <property type="evidence" value="ECO:0000318"/>
    <property type="project" value="GO_Central"/>
</dbReference>
<dbReference type="InterPro" id="IPR001863">
    <property type="entry name" value="Glypican"/>
</dbReference>
<dbReference type="InterPro" id="IPR019803">
    <property type="entry name" value="Glypican_CS"/>
</dbReference>
<dbReference type="PANTHER" id="PTHR10822">
    <property type="entry name" value="GLYPICAN"/>
    <property type="match status" value="1"/>
</dbReference>
<dbReference type="PANTHER" id="PTHR10822:SF4">
    <property type="entry name" value="GLYPICAN-3"/>
    <property type="match status" value="1"/>
</dbReference>
<dbReference type="Pfam" id="PF01153">
    <property type="entry name" value="Glypican"/>
    <property type="match status" value="1"/>
</dbReference>
<dbReference type="PROSITE" id="PS01207">
    <property type="entry name" value="GLYPICAN"/>
    <property type="match status" value="1"/>
</dbReference>
<organism>
    <name type="scientific">Pan troglodytes</name>
    <name type="common">Chimpanzee</name>
    <dbReference type="NCBI Taxonomy" id="9598"/>
    <lineage>
        <taxon>Eukaryota</taxon>
        <taxon>Metazoa</taxon>
        <taxon>Chordata</taxon>
        <taxon>Craniata</taxon>
        <taxon>Vertebrata</taxon>
        <taxon>Euteleostomi</taxon>
        <taxon>Mammalia</taxon>
        <taxon>Eutheria</taxon>
        <taxon>Euarchontoglires</taxon>
        <taxon>Primates</taxon>
        <taxon>Haplorrhini</taxon>
        <taxon>Catarrhini</taxon>
        <taxon>Hominidae</taxon>
        <taxon>Pan</taxon>
    </lineage>
</organism>